<name>CMOA_PSEP1</name>
<evidence type="ECO:0000255" key="1">
    <source>
        <dbReference type="HAMAP-Rule" id="MF_01589"/>
    </source>
</evidence>
<keyword id="KW-0949">S-adenosyl-L-methionine</keyword>
<keyword id="KW-0808">Transferase</keyword>
<gene>
    <name evidence="1" type="primary">cmoA</name>
    <name type="ordered locus">Pput_4280</name>
</gene>
<reference key="1">
    <citation type="submission" date="2007-05" db="EMBL/GenBank/DDBJ databases">
        <title>Complete sequence of Pseudomonas putida F1.</title>
        <authorList>
            <consortium name="US DOE Joint Genome Institute"/>
            <person name="Copeland A."/>
            <person name="Lucas S."/>
            <person name="Lapidus A."/>
            <person name="Barry K."/>
            <person name="Detter J.C."/>
            <person name="Glavina del Rio T."/>
            <person name="Hammon N."/>
            <person name="Israni S."/>
            <person name="Dalin E."/>
            <person name="Tice H."/>
            <person name="Pitluck S."/>
            <person name="Chain P."/>
            <person name="Malfatti S."/>
            <person name="Shin M."/>
            <person name="Vergez L."/>
            <person name="Schmutz J."/>
            <person name="Larimer F."/>
            <person name="Land M."/>
            <person name="Hauser L."/>
            <person name="Kyrpides N."/>
            <person name="Lykidis A."/>
            <person name="Parales R."/>
            <person name="Richardson P."/>
        </authorList>
    </citation>
    <scope>NUCLEOTIDE SEQUENCE [LARGE SCALE GENOMIC DNA]</scope>
    <source>
        <strain>ATCC 700007 / DSM 6899 / JCM 31910 / BCRC 17059 / LMG 24140 / F1</strain>
    </source>
</reference>
<proteinExistence type="inferred from homology"/>
<protein>
    <recommendedName>
        <fullName evidence="1">Carboxy-S-adenosyl-L-methionine synthase</fullName>
        <shortName evidence="1">Cx-SAM synthase</shortName>
        <ecNumber evidence="1">2.1.3.-</ecNumber>
    </recommendedName>
</protein>
<feature type="chain" id="PRO_1000069324" description="Carboxy-S-adenosyl-L-methionine synthase">
    <location>
        <begin position="1"/>
        <end position="247"/>
    </location>
</feature>
<feature type="binding site" evidence="1">
    <location>
        <position position="40"/>
    </location>
    <ligand>
        <name>S-adenosyl-L-methionine</name>
        <dbReference type="ChEBI" id="CHEBI:59789"/>
    </ligand>
</feature>
<feature type="binding site" evidence="1">
    <location>
        <begin position="65"/>
        <end position="67"/>
    </location>
    <ligand>
        <name>S-adenosyl-L-methionine</name>
        <dbReference type="ChEBI" id="CHEBI:59789"/>
    </ligand>
</feature>
<feature type="binding site" evidence="1">
    <location>
        <begin position="90"/>
        <end position="91"/>
    </location>
    <ligand>
        <name>S-adenosyl-L-methionine</name>
        <dbReference type="ChEBI" id="CHEBI:59789"/>
    </ligand>
</feature>
<feature type="binding site" evidence="1">
    <location>
        <begin position="122"/>
        <end position="123"/>
    </location>
    <ligand>
        <name>S-adenosyl-L-methionine</name>
        <dbReference type="ChEBI" id="CHEBI:59789"/>
    </ligand>
</feature>
<feature type="binding site" evidence="1">
    <location>
        <position position="137"/>
    </location>
    <ligand>
        <name>S-adenosyl-L-methionine</name>
        <dbReference type="ChEBI" id="CHEBI:59789"/>
    </ligand>
</feature>
<feature type="binding site" evidence="1">
    <location>
        <position position="204"/>
    </location>
    <ligand>
        <name>S-adenosyl-L-methionine</name>
        <dbReference type="ChEBI" id="CHEBI:59789"/>
    </ligand>
</feature>
<sequence length="247" mass="27619">MSKQPDRLFSQPLEQVPDFVFNEDVVRVFPDMIKRSVPGYPTIVENLGVLAARFAQPGTALYDLGASLGAVTQSLRRHVRSDGCRVIAVDNSAAMVERCRQYLTAQDSMFQELLPVHVLEADILALPFEPASVVAMNFTLQFIAPDQRLELLGRIRQALLPGGALILSEKLRFADEQAQDLLNELHLDFKRANGYSELEIAQKRSAIENVMKPDTLETHQERLRAAGFSKVVPWFQCLNFASLIALP</sequence>
<comment type="function">
    <text evidence="1">Catalyzes the conversion of S-adenosyl-L-methionine (SAM) to carboxy-S-adenosyl-L-methionine (Cx-SAM).</text>
</comment>
<comment type="catalytic activity">
    <reaction evidence="1">
        <text>prephenate + S-adenosyl-L-methionine = carboxy-S-adenosyl-L-methionine + 3-phenylpyruvate + H2O</text>
        <dbReference type="Rhea" id="RHEA:51692"/>
        <dbReference type="ChEBI" id="CHEBI:15377"/>
        <dbReference type="ChEBI" id="CHEBI:18005"/>
        <dbReference type="ChEBI" id="CHEBI:29934"/>
        <dbReference type="ChEBI" id="CHEBI:59789"/>
        <dbReference type="ChEBI" id="CHEBI:134278"/>
    </reaction>
</comment>
<comment type="subunit">
    <text evidence="1">Homodimer.</text>
</comment>
<comment type="similarity">
    <text evidence="1">Belongs to the class I-like SAM-binding methyltransferase superfamily. Cx-SAM synthase family.</text>
</comment>
<organism>
    <name type="scientific">Pseudomonas putida (strain ATCC 700007 / DSM 6899 / JCM 31910 / BCRC 17059 / LMG 24140 / F1)</name>
    <dbReference type="NCBI Taxonomy" id="351746"/>
    <lineage>
        <taxon>Bacteria</taxon>
        <taxon>Pseudomonadati</taxon>
        <taxon>Pseudomonadota</taxon>
        <taxon>Gammaproteobacteria</taxon>
        <taxon>Pseudomonadales</taxon>
        <taxon>Pseudomonadaceae</taxon>
        <taxon>Pseudomonas</taxon>
    </lineage>
</organism>
<accession>A5W8E4</accession>
<dbReference type="EC" id="2.1.3.-" evidence="1"/>
<dbReference type="EMBL" id="CP000712">
    <property type="protein sequence ID" value="ABQ80404.1"/>
    <property type="molecule type" value="Genomic_DNA"/>
</dbReference>
<dbReference type="SMR" id="A5W8E4"/>
<dbReference type="KEGG" id="ppf:Pput_4280"/>
<dbReference type="eggNOG" id="COG2226">
    <property type="taxonomic scope" value="Bacteria"/>
</dbReference>
<dbReference type="HOGENOM" id="CLU_078475_0_0_6"/>
<dbReference type="GO" id="GO:0016743">
    <property type="term" value="F:carboxyl- or carbamoyltransferase activity"/>
    <property type="evidence" value="ECO:0007669"/>
    <property type="project" value="UniProtKB-UniRule"/>
</dbReference>
<dbReference type="GO" id="GO:1904047">
    <property type="term" value="F:S-adenosyl-L-methionine binding"/>
    <property type="evidence" value="ECO:0007669"/>
    <property type="project" value="UniProtKB-UniRule"/>
</dbReference>
<dbReference type="GO" id="GO:0002098">
    <property type="term" value="P:tRNA wobble uridine modification"/>
    <property type="evidence" value="ECO:0007669"/>
    <property type="project" value="InterPro"/>
</dbReference>
<dbReference type="CDD" id="cd02440">
    <property type="entry name" value="AdoMet_MTases"/>
    <property type="match status" value="1"/>
</dbReference>
<dbReference type="Gene3D" id="3.40.50.150">
    <property type="entry name" value="Vaccinia Virus protein VP39"/>
    <property type="match status" value="1"/>
</dbReference>
<dbReference type="HAMAP" id="MF_01589">
    <property type="entry name" value="Cx_SAM_synthase"/>
    <property type="match status" value="1"/>
</dbReference>
<dbReference type="InterPro" id="IPR005271">
    <property type="entry name" value="CmoA"/>
</dbReference>
<dbReference type="InterPro" id="IPR041698">
    <property type="entry name" value="Methyltransf_25"/>
</dbReference>
<dbReference type="InterPro" id="IPR029063">
    <property type="entry name" value="SAM-dependent_MTases_sf"/>
</dbReference>
<dbReference type="NCBIfam" id="TIGR00740">
    <property type="entry name" value="carboxy-S-adenosyl-L-methionine synthase CmoA"/>
    <property type="match status" value="1"/>
</dbReference>
<dbReference type="NCBIfam" id="NF011995">
    <property type="entry name" value="PRK15451.1"/>
    <property type="match status" value="1"/>
</dbReference>
<dbReference type="PANTHER" id="PTHR43861:SF2">
    <property type="entry name" value="CARBOXY-S-ADENOSYL-L-METHIONINE SYNTHASE"/>
    <property type="match status" value="1"/>
</dbReference>
<dbReference type="PANTHER" id="PTHR43861">
    <property type="entry name" value="TRANS-ACONITATE 2-METHYLTRANSFERASE-RELATED"/>
    <property type="match status" value="1"/>
</dbReference>
<dbReference type="Pfam" id="PF13649">
    <property type="entry name" value="Methyltransf_25"/>
    <property type="match status" value="1"/>
</dbReference>
<dbReference type="PIRSF" id="PIRSF006325">
    <property type="entry name" value="MeTrfase_bac"/>
    <property type="match status" value="1"/>
</dbReference>
<dbReference type="SUPFAM" id="SSF53335">
    <property type="entry name" value="S-adenosyl-L-methionine-dependent methyltransferases"/>
    <property type="match status" value="1"/>
</dbReference>